<name>CAR18_HUMAN</name>
<keyword id="KW-0002">3D-structure</keyword>
<keyword id="KW-0646">Protease inhibitor</keyword>
<keyword id="KW-1267">Proteomics identification</keyword>
<keyword id="KW-1185">Reference proteome</keyword>
<keyword id="KW-0789">Thiol protease inhibitor</keyword>
<accession>P57730</accession>
<accession>A2RRF8</accession>
<protein>
    <recommendedName>
        <fullName>Caspase recruitment domain-containing protein 18</fullName>
    </recommendedName>
    <alternativeName>
        <fullName>Caspase-1 inhibitor Iceberg</fullName>
    </alternativeName>
</protein>
<proteinExistence type="evidence at protein level"/>
<reference key="1">
    <citation type="journal article" date="2000" name="Cell">
        <title>ICEBERG: a novel inhibitor of interleukin-1beta generation.</title>
        <authorList>
            <person name="Humke E.W."/>
            <person name="Shriver S.K."/>
            <person name="Starovasnik M.A."/>
            <person name="Fairbrother W.J."/>
            <person name="Dixit V.M."/>
        </authorList>
    </citation>
    <scope>NUCLEOTIDE SEQUENCE [MRNA]</scope>
    <scope>STRUCTURE BY NMR</scope>
    <scope>FUNCTION</scope>
    <scope>INTERACTION WITH CASP1</scope>
    <scope>INDUCTION</scope>
    <scope>TISSUE SPECIFICITY</scope>
</reference>
<reference key="2">
    <citation type="journal article" date="2003" name="Genome Res.">
        <title>The secreted protein discovery initiative (SPDI), a large-scale effort to identify novel human secreted and transmembrane proteins: a bioinformatics assessment.</title>
        <authorList>
            <person name="Clark H.F."/>
            <person name="Gurney A.L."/>
            <person name="Abaya E."/>
            <person name="Baker K."/>
            <person name="Baldwin D.T."/>
            <person name="Brush J."/>
            <person name="Chen J."/>
            <person name="Chow B."/>
            <person name="Chui C."/>
            <person name="Crowley C."/>
            <person name="Currell B."/>
            <person name="Deuel B."/>
            <person name="Dowd P."/>
            <person name="Eaton D."/>
            <person name="Foster J.S."/>
            <person name="Grimaldi C."/>
            <person name="Gu Q."/>
            <person name="Hass P.E."/>
            <person name="Heldens S."/>
            <person name="Huang A."/>
            <person name="Kim H.S."/>
            <person name="Klimowski L."/>
            <person name="Jin Y."/>
            <person name="Johnson S."/>
            <person name="Lee J."/>
            <person name="Lewis L."/>
            <person name="Liao D."/>
            <person name="Mark M.R."/>
            <person name="Robbie E."/>
            <person name="Sanchez C."/>
            <person name="Schoenfeld J."/>
            <person name="Seshagiri S."/>
            <person name="Simmons L."/>
            <person name="Singh J."/>
            <person name="Smith V."/>
            <person name="Stinson J."/>
            <person name="Vagts A."/>
            <person name="Vandlen R.L."/>
            <person name="Watanabe C."/>
            <person name="Wieand D."/>
            <person name="Woods K."/>
            <person name="Xie M.-H."/>
            <person name="Yansura D.G."/>
            <person name="Yi S."/>
            <person name="Yu G."/>
            <person name="Yuan J."/>
            <person name="Zhang M."/>
            <person name="Zhang Z."/>
            <person name="Goddard A.D."/>
            <person name="Wood W.I."/>
            <person name="Godowski P.J."/>
            <person name="Gray A.M."/>
        </authorList>
    </citation>
    <scope>NUCLEOTIDE SEQUENCE [LARGE SCALE MRNA]</scope>
</reference>
<reference key="3">
    <citation type="journal article" date="2004" name="Genome Res.">
        <title>The status, quality, and expansion of the NIH full-length cDNA project: the Mammalian Gene Collection (MGC).</title>
        <authorList>
            <consortium name="The MGC Project Team"/>
        </authorList>
    </citation>
    <scope>NUCLEOTIDE SEQUENCE [LARGE SCALE MRNA]</scope>
</reference>
<reference key="4">
    <citation type="journal article" date="2002" name="J. Biol. Chem.">
        <title>CARD-8 protein, a new CARD family member that regulates caspase-1 activation and apoptosis.</title>
        <authorList>
            <person name="Razmara M."/>
            <person name="Srinivasula S.M."/>
            <person name="Wang L."/>
            <person name="Poyet J.-L."/>
            <person name="Geddes B.J."/>
            <person name="DiStefano P.S."/>
            <person name="Bertin J."/>
            <person name="Alnemri E.S."/>
        </authorList>
    </citation>
    <scope>INTERACTION WITH CARD8</scope>
</reference>
<evidence type="ECO:0000255" key="1">
    <source>
        <dbReference type="PROSITE-ProRule" id="PRU00046"/>
    </source>
</evidence>
<evidence type="ECO:0000269" key="2">
    <source>
    </source>
</evidence>
<evidence type="ECO:0000269" key="3">
    <source>
    </source>
</evidence>
<evidence type="ECO:0007829" key="4">
    <source>
        <dbReference type="PDB" id="1DGN"/>
    </source>
</evidence>
<comment type="function">
    <text evidence="2">Inhibits generation of IL-1-beta by interacting with caspase-1 and preventing its association with RIP2. Down-regulates the release of IL1B.</text>
</comment>
<comment type="subunit">
    <text evidence="2 3">Interacts with pro-CASP1. Interacts with CARD8.</text>
</comment>
<comment type="interaction">
    <interactant intactId="EBI-16203975">
        <id>P57730</id>
    </interactant>
    <interactant intactId="EBI-516667">
        <id>P29466</id>
        <label>CASP1</label>
    </interactant>
    <organismsDiffer>false</organismsDiffer>
    <experiments>3</experiments>
</comment>
<comment type="tissue specificity">
    <text evidence="2">Primarily expressed in the heart and placenta.</text>
</comment>
<comment type="induction">
    <text evidence="2">Up-regulated in response to TNF and bacterial lipopolysaccharides (LPS).</text>
</comment>
<sequence>MADQLLRKKRRIFIHSVGAGTINALLDCLLEDEVISQEDMNKVRDENDTVMDKARVLIDLVTGKGPKSCCKFIKHLCEEDPQLASKMGLH</sequence>
<feature type="chain" id="PRO_0000084145" description="Caspase recruitment domain-containing protein 18">
    <location>
        <begin position="1"/>
        <end position="90"/>
    </location>
</feature>
<feature type="domain" description="CARD" evidence="1">
    <location>
        <begin position="1"/>
        <end position="90"/>
    </location>
</feature>
<feature type="helix" evidence="4">
    <location>
        <begin position="5"/>
        <end position="8"/>
    </location>
</feature>
<feature type="helix" evidence="4">
    <location>
        <begin position="10"/>
        <end position="14"/>
    </location>
</feature>
<feature type="helix" evidence="4">
    <location>
        <begin position="19"/>
        <end position="32"/>
    </location>
</feature>
<feature type="helix" evidence="4">
    <location>
        <begin position="37"/>
        <end position="44"/>
    </location>
</feature>
<feature type="helix" evidence="4">
    <location>
        <begin position="50"/>
        <end position="63"/>
    </location>
</feature>
<feature type="helix" evidence="4">
    <location>
        <begin position="66"/>
        <end position="79"/>
    </location>
</feature>
<feature type="helix" evidence="4">
    <location>
        <begin position="83"/>
        <end position="87"/>
    </location>
</feature>
<dbReference type="EMBL" id="AF208005">
    <property type="protein sequence ID" value="AAG23528.1"/>
    <property type="molecule type" value="mRNA"/>
</dbReference>
<dbReference type="EMBL" id="AY358231">
    <property type="protein sequence ID" value="AAQ88598.1"/>
    <property type="molecule type" value="mRNA"/>
</dbReference>
<dbReference type="EMBL" id="BC131610">
    <property type="protein sequence ID" value="AAI31611.1"/>
    <property type="molecule type" value="mRNA"/>
</dbReference>
<dbReference type="CCDS" id="CCDS53705.1"/>
<dbReference type="RefSeq" id="NP_067546.1">
    <property type="nucleotide sequence ID" value="NM_021571.4"/>
</dbReference>
<dbReference type="PDB" id="1DGN">
    <property type="method" value="NMR"/>
    <property type="chains" value="A=2-90"/>
</dbReference>
<dbReference type="PDBsum" id="1DGN"/>
<dbReference type="SMR" id="P57730"/>
<dbReference type="BioGRID" id="121859">
    <property type="interactions" value="2"/>
</dbReference>
<dbReference type="DIP" id="DIP-41317N"/>
<dbReference type="FunCoup" id="P57730">
    <property type="interactions" value="184"/>
</dbReference>
<dbReference type="IntAct" id="P57730">
    <property type="interactions" value="1"/>
</dbReference>
<dbReference type="STRING" id="9606.ENSP00000436691"/>
<dbReference type="iPTMnet" id="P57730"/>
<dbReference type="PhosphoSitePlus" id="P57730"/>
<dbReference type="BioMuta" id="CARD18"/>
<dbReference type="DMDM" id="12230142"/>
<dbReference type="jPOST" id="P57730"/>
<dbReference type="MassIVE" id="P57730"/>
<dbReference type="PaxDb" id="9606-ENSP00000436691"/>
<dbReference type="PeptideAtlas" id="P57730"/>
<dbReference type="ProteomicsDB" id="57022"/>
<dbReference type="Antibodypedia" id="50206">
    <property type="antibodies" value="56 antibodies from 16 providers"/>
</dbReference>
<dbReference type="DNASU" id="59082"/>
<dbReference type="Ensembl" id="ENST00000530950.2">
    <property type="protein sequence ID" value="ENSP00000436691.1"/>
    <property type="gene ID" value="ENSG00000255501.3"/>
</dbReference>
<dbReference type="GeneID" id="59082"/>
<dbReference type="KEGG" id="hsa:59082"/>
<dbReference type="MANE-Select" id="ENST00000530950.2">
    <property type="protein sequence ID" value="ENSP00000436691.1"/>
    <property type="RefSeq nucleotide sequence ID" value="NM_021571.4"/>
    <property type="RefSeq protein sequence ID" value="NP_067546.1"/>
</dbReference>
<dbReference type="UCSC" id="uc021qpy.2">
    <property type="organism name" value="human"/>
</dbReference>
<dbReference type="AGR" id="HGNC:28861"/>
<dbReference type="CTD" id="59082"/>
<dbReference type="DisGeNET" id="59082"/>
<dbReference type="GeneCards" id="CARD18"/>
<dbReference type="HGNC" id="HGNC:28861">
    <property type="gene designation" value="CARD18"/>
</dbReference>
<dbReference type="HPA" id="ENSG00000255501">
    <property type="expression patterns" value="Tissue enriched (skin)"/>
</dbReference>
<dbReference type="MIM" id="605354">
    <property type="type" value="gene"/>
</dbReference>
<dbReference type="neXtProt" id="NX_P57730"/>
<dbReference type="OpenTargets" id="ENSG00000255501"/>
<dbReference type="PharmGKB" id="PA164717642"/>
<dbReference type="VEuPathDB" id="HostDB:ENSG00000255501"/>
<dbReference type="eggNOG" id="KOG3573">
    <property type="taxonomic scope" value="Eukaryota"/>
</dbReference>
<dbReference type="GeneTree" id="ENSGT00940000164349"/>
<dbReference type="HOGENOM" id="CLU_119795_1_0_1"/>
<dbReference type="InParanoid" id="P57730"/>
<dbReference type="OMA" id="IFIQSVG"/>
<dbReference type="OrthoDB" id="8869108at2759"/>
<dbReference type="PAN-GO" id="P57730">
    <property type="GO annotations" value="2 GO annotations based on evolutionary models"/>
</dbReference>
<dbReference type="PhylomeDB" id="P57730"/>
<dbReference type="PathwayCommons" id="P57730"/>
<dbReference type="SignaLink" id="P57730"/>
<dbReference type="BioGRID-ORCS" id="59082">
    <property type="hits" value="12 hits in 1141 CRISPR screens"/>
</dbReference>
<dbReference type="ChiTaRS" id="CARD18">
    <property type="organism name" value="human"/>
</dbReference>
<dbReference type="EvolutionaryTrace" id="P57730"/>
<dbReference type="GenomeRNAi" id="59082"/>
<dbReference type="Pharos" id="P57730">
    <property type="development level" value="Tbio"/>
</dbReference>
<dbReference type="PRO" id="PR:P57730"/>
<dbReference type="Proteomes" id="UP000005640">
    <property type="component" value="Chromosome 11"/>
</dbReference>
<dbReference type="RNAct" id="P57730">
    <property type="molecule type" value="protein"/>
</dbReference>
<dbReference type="Bgee" id="ENSG00000255501">
    <property type="expression patterns" value="Expressed in upper arm skin and 97 other cell types or tissues"/>
</dbReference>
<dbReference type="ExpressionAtlas" id="P57730">
    <property type="expression patterns" value="baseline and differential"/>
</dbReference>
<dbReference type="GO" id="GO:0032991">
    <property type="term" value="C:protein-containing complex"/>
    <property type="evidence" value="ECO:0000314"/>
    <property type="project" value="UniProtKB"/>
</dbReference>
<dbReference type="GO" id="GO:0050700">
    <property type="term" value="F:CARD domain binding"/>
    <property type="evidence" value="ECO:0000353"/>
    <property type="project" value="UniProtKB"/>
</dbReference>
<dbReference type="GO" id="GO:0089720">
    <property type="term" value="F:caspase binding"/>
    <property type="evidence" value="ECO:0000353"/>
    <property type="project" value="UniProtKB"/>
</dbReference>
<dbReference type="GO" id="GO:0004197">
    <property type="term" value="F:cysteine-type endopeptidase activity"/>
    <property type="evidence" value="ECO:0007669"/>
    <property type="project" value="InterPro"/>
</dbReference>
<dbReference type="GO" id="GO:0004869">
    <property type="term" value="F:cysteine-type endopeptidase inhibitor activity"/>
    <property type="evidence" value="ECO:0007669"/>
    <property type="project" value="UniProtKB-KW"/>
</dbReference>
<dbReference type="GO" id="GO:0006954">
    <property type="term" value="P:inflammatory response"/>
    <property type="evidence" value="ECO:0000303"/>
    <property type="project" value="UniProtKB"/>
</dbReference>
<dbReference type="GO" id="GO:0032691">
    <property type="term" value="P:negative regulation of interleukin-1 beta production"/>
    <property type="evidence" value="ECO:0000314"/>
    <property type="project" value="UniProtKB"/>
</dbReference>
<dbReference type="GO" id="GO:0032091">
    <property type="term" value="P:negative regulation of protein binding"/>
    <property type="evidence" value="ECO:0000314"/>
    <property type="project" value="UniProtKB"/>
</dbReference>
<dbReference type="GO" id="GO:0006508">
    <property type="term" value="P:proteolysis"/>
    <property type="evidence" value="ECO:0007669"/>
    <property type="project" value="InterPro"/>
</dbReference>
<dbReference type="GO" id="GO:0042981">
    <property type="term" value="P:regulation of apoptotic process"/>
    <property type="evidence" value="ECO:0007669"/>
    <property type="project" value="InterPro"/>
</dbReference>
<dbReference type="CDD" id="cd08325">
    <property type="entry name" value="CARD_CASP1-like"/>
    <property type="match status" value="1"/>
</dbReference>
<dbReference type="FunFam" id="1.10.533.10:FF:000031">
    <property type="entry name" value="Caspase 1, isoform CRA_b"/>
    <property type="match status" value="1"/>
</dbReference>
<dbReference type="Gene3D" id="1.10.533.10">
    <property type="entry name" value="Death Domain, Fas"/>
    <property type="match status" value="1"/>
</dbReference>
<dbReference type="InterPro" id="IPR001315">
    <property type="entry name" value="CARD"/>
</dbReference>
<dbReference type="InterPro" id="IPR011029">
    <property type="entry name" value="DEATH-like_dom_sf"/>
</dbReference>
<dbReference type="InterPro" id="IPR002398">
    <property type="entry name" value="Pept_C14"/>
</dbReference>
<dbReference type="PANTHER" id="PTHR47901">
    <property type="entry name" value="CASPASE RECRUITMENT DOMAIN-CONTAINING PROTEIN 18"/>
    <property type="match status" value="1"/>
</dbReference>
<dbReference type="PANTHER" id="PTHR47901:SF3">
    <property type="entry name" value="CASPASE-1"/>
    <property type="match status" value="1"/>
</dbReference>
<dbReference type="Pfam" id="PF00619">
    <property type="entry name" value="CARD"/>
    <property type="match status" value="1"/>
</dbReference>
<dbReference type="SUPFAM" id="SSF47986">
    <property type="entry name" value="DEATH domain"/>
    <property type="match status" value="1"/>
</dbReference>
<dbReference type="PROSITE" id="PS50209">
    <property type="entry name" value="CARD"/>
    <property type="match status" value="1"/>
</dbReference>
<organism>
    <name type="scientific">Homo sapiens</name>
    <name type="common">Human</name>
    <dbReference type="NCBI Taxonomy" id="9606"/>
    <lineage>
        <taxon>Eukaryota</taxon>
        <taxon>Metazoa</taxon>
        <taxon>Chordata</taxon>
        <taxon>Craniata</taxon>
        <taxon>Vertebrata</taxon>
        <taxon>Euteleostomi</taxon>
        <taxon>Mammalia</taxon>
        <taxon>Eutheria</taxon>
        <taxon>Euarchontoglires</taxon>
        <taxon>Primates</taxon>
        <taxon>Haplorrhini</taxon>
        <taxon>Catarrhini</taxon>
        <taxon>Hominidae</taxon>
        <taxon>Homo</taxon>
    </lineage>
</organism>
<gene>
    <name type="primary">CARD18</name>
    <name type="synonym">ICEBERG</name>
    <name type="ORF">UNQ5804/PRO19611</name>
</gene>